<comment type="function">
    <text evidence="1">One of the primary rRNA binding proteins, it binds directly near the 3'-end of the 23S rRNA, where it nucleates assembly of the 50S subunit.</text>
</comment>
<comment type="subunit">
    <text evidence="1">Part of the 50S ribosomal subunit. Forms a cluster with proteins L14 and L19.</text>
</comment>
<comment type="similarity">
    <text evidence="1">Belongs to the universal ribosomal protein uL3 family.</text>
</comment>
<gene>
    <name evidence="1" type="primary">rplC</name>
    <name type="ordered locus">TGRD_082</name>
</gene>
<proteinExistence type="inferred from homology"/>
<dbReference type="EMBL" id="AP009510">
    <property type="protein sequence ID" value="BAG13565.1"/>
    <property type="molecule type" value="Genomic_DNA"/>
</dbReference>
<dbReference type="RefSeq" id="WP_015423094.1">
    <property type="nucleotide sequence ID" value="NC_020419.1"/>
</dbReference>
<dbReference type="SMR" id="B1GZ83"/>
<dbReference type="STRING" id="471821.TGRD_082"/>
<dbReference type="KEGG" id="rsd:TGRD_082"/>
<dbReference type="PATRIC" id="fig|471821.5.peg.125"/>
<dbReference type="HOGENOM" id="CLU_044142_4_1_0"/>
<dbReference type="Proteomes" id="UP000001691">
    <property type="component" value="Chromosome"/>
</dbReference>
<dbReference type="GO" id="GO:0022625">
    <property type="term" value="C:cytosolic large ribosomal subunit"/>
    <property type="evidence" value="ECO:0007669"/>
    <property type="project" value="TreeGrafter"/>
</dbReference>
<dbReference type="GO" id="GO:0019843">
    <property type="term" value="F:rRNA binding"/>
    <property type="evidence" value="ECO:0007669"/>
    <property type="project" value="UniProtKB-UniRule"/>
</dbReference>
<dbReference type="GO" id="GO:0003735">
    <property type="term" value="F:structural constituent of ribosome"/>
    <property type="evidence" value="ECO:0007669"/>
    <property type="project" value="InterPro"/>
</dbReference>
<dbReference type="GO" id="GO:0006412">
    <property type="term" value="P:translation"/>
    <property type="evidence" value="ECO:0007669"/>
    <property type="project" value="UniProtKB-UniRule"/>
</dbReference>
<dbReference type="FunFam" id="2.40.30.10:FF:000004">
    <property type="entry name" value="50S ribosomal protein L3"/>
    <property type="match status" value="1"/>
</dbReference>
<dbReference type="FunFam" id="3.30.160.810:FF:000001">
    <property type="entry name" value="50S ribosomal protein L3"/>
    <property type="match status" value="1"/>
</dbReference>
<dbReference type="Gene3D" id="3.30.160.810">
    <property type="match status" value="1"/>
</dbReference>
<dbReference type="Gene3D" id="2.40.30.10">
    <property type="entry name" value="Translation factors"/>
    <property type="match status" value="1"/>
</dbReference>
<dbReference type="HAMAP" id="MF_01325_B">
    <property type="entry name" value="Ribosomal_uL3_B"/>
    <property type="match status" value="1"/>
</dbReference>
<dbReference type="InterPro" id="IPR000597">
    <property type="entry name" value="Ribosomal_uL3"/>
</dbReference>
<dbReference type="InterPro" id="IPR019927">
    <property type="entry name" value="Ribosomal_uL3_bac/org-type"/>
</dbReference>
<dbReference type="InterPro" id="IPR019926">
    <property type="entry name" value="Ribosomal_uL3_CS"/>
</dbReference>
<dbReference type="InterPro" id="IPR009000">
    <property type="entry name" value="Transl_B-barrel_sf"/>
</dbReference>
<dbReference type="NCBIfam" id="TIGR03625">
    <property type="entry name" value="L3_bact"/>
    <property type="match status" value="1"/>
</dbReference>
<dbReference type="PANTHER" id="PTHR11229">
    <property type="entry name" value="50S RIBOSOMAL PROTEIN L3"/>
    <property type="match status" value="1"/>
</dbReference>
<dbReference type="PANTHER" id="PTHR11229:SF16">
    <property type="entry name" value="LARGE RIBOSOMAL SUBUNIT PROTEIN UL3C"/>
    <property type="match status" value="1"/>
</dbReference>
<dbReference type="Pfam" id="PF00297">
    <property type="entry name" value="Ribosomal_L3"/>
    <property type="match status" value="1"/>
</dbReference>
<dbReference type="SUPFAM" id="SSF50447">
    <property type="entry name" value="Translation proteins"/>
    <property type="match status" value="1"/>
</dbReference>
<dbReference type="PROSITE" id="PS00474">
    <property type="entry name" value="RIBOSOMAL_L3"/>
    <property type="match status" value="1"/>
</dbReference>
<evidence type="ECO:0000255" key="1">
    <source>
        <dbReference type="HAMAP-Rule" id="MF_01325"/>
    </source>
</evidence>
<evidence type="ECO:0000256" key="2">
    <source>
        <dbReference type="SAM" id="MobiDB-lite"/>
    </source>
</evidence>
<evidence type="ECO:0000305" key="3"/>
<feature type="chain" id="PRO_0000353618" description="Large ribosomal subunit protein uL3">
    <location>
        <begin position="1"/>
        <end position="227"/>
    </location>
</feature>
<feature type="region of interest" description="Disordered" evidence="2">
    <location>
        <begin position="129"/>
        <end position="154"/>
    </location>
</feature>
<name>RL3_ENDTX</name>
<keyword id="KW-0687">Ribonucleoprotein</keyword>
<keyword id="KW-0689">Ribosomal protein</keyword>
<keyword id="KW-0694">RNA-binding</keyword>
<keyword id="KW-0699">rRNA-binding</keyword>
<reference key="1">
    <citation type="journal article" date="2008" name="Proc. Natl. Acad. Sci. U.S.A.">
        <title>Complete genome of the uncultured termite group 1 bacteria in a single host protist cell.</title>
        <authorList>
            <person name="Hongoh Y."/>
            <person name="Sharma V.K."/>
            <person name="Prakash T."/>
            <person name="Noda S."/>
            <person name="Taylor T.D."/>
            <person name="Kudo T."/>
            <person name="Sakaki Y."/>
            <person name="Toyoda A."/>
            <person name="Hattori M."/>
            <person name="Ohkuma M."/>
        </authorList>
    </citation>
    <scope>NUCLEOTIDE SEQUENCE [LARGE SCALE GENOMIC DNA]</scope>
</reference>
<protein>
    <recommendedName>
        <fullName evidence="1">Large ribosomal subunit protein uL3</fullName>
    </recommendedName>
    <alternativeName>
        <fullName evidence="3">50S ribosomal protein L3</fullName>
    </alternativeName>
</protein>
<organism>
    <name type="scientific">Endomicrobium trichonymphae</name>
    <dbReference type="NCBI Taxonomy" id="1408204"/>
    <lineage>
        <taxon>Bacteria</taxon>
        <taxon>Pseudomonadati</taxon>
        <taxon>Elusimicrobiota</taxon>
        <taxon>Endomicrobiia</taxon>
        <taxon>Endomicrobiales</taxon>
        <taxon>Endomicrobiaceae</taxon>
        <taxon>Candidatus Endomicrobiellum</taxon>
    </lineage>
</organism>
<sequence>MLKFIIGKKIGMTQVFDVKGNLMPVTVVEVGHCVVTDVRTVEKNGYSAVQLGFGEIKEKGLNKAQAVFFKRNNLSYKRTLKEFRVSEVAGFSVGHEIKADAFKAGDYVDVSAVTKGKGYAGVIKRHNFGMQPVSHGQSDRTRSRGSSGAQGPQKVLKGLKMSGHMGNEYVTVQKLLIVNVDAEKNVLLIKGSVPSANRGTLFISSTLKKIPKVLVAVVHKGTKVKKK</sequence>
<accession>B1GZ83</accession>